<proteinExistence type="evidence at protein level"/>
<sequence length="218" mass="24987">MFNFWGSKEQQQGQSRPSPEASATPWYSPSLVTSPSSSRPQTSGQIPSHVSPGEAAGIIAILKDKSVDELRKLLSDKDAYQQFLHSLDQVTIQNNIREELRKETLHLARENLEKEPQIVELRNQCRIIRTSELATAQEKLNELENQREEILKFYSPGSLLHRLQDAMNQVDEESEELQQKFMEKDIDTAAFVQKYKKLRSKYHRRALIHLAAKTSSIG</sequence>
<comment type="function">
    <text evidence="1">Component of the ESCRT-I complex (endosomal sorting complex required for transport I), a regulator of vesicular trafficking process. Required for the sorting of endocytic ubiquitinated cargos into multivesicular bodies (MVBs) (By similarity).</text>
</comment>
<comment type="subunit">
    <text evidence="4">Component of the endosomal sorting required for transport complex I (ESCRT-I), composed of ELC, VPS28 and VPS37. Interacts with ELC.</text>
</comment>
<comment type="subcellular location">
    <subcellularLocation>
        <location evidence="1">Endosome</location>
    </subcellularLocation>
</comment>
<comment type="alternative products">
    <event type="alternative splicing"/>
    <isoform>
        <id>Q3EBL9-1</id>
        <name>1</name>
        <sequence type="displayed"/>
    </isoform>
    <isoform>
        <id>Q3EBL9-2</id>
        <name>2</name>
        <sequence type="described" ref="VSP_036800 VSP_036801"/>
    </isoform>
    <isoform>
        <id>Q3EBL9-3</id>
        <name>3</name>
        <sequence type="described" ref="VSP_036799 VSP_036802"/>
    </isoform>
</comment>
<comment type="miscellaneous">
    <molecule>Isoform 2</molecule>
    <text evidence="6">May be due to a competing acceptor splice site.</text>
</comment>
<comment type="similarity">
    <text evidence="6">Belongs to the VPS37 family.</text>
</comment>
<comment type="sequence caution" evidence="6">
    <conflict type="erroneous gene model prediction">
        <sequence resource="EMBL-CDS" id="AAD20144"/>
    </conflict>
</comment>
<comment type="sequence caution" evidence="6">
    <conflict type="frameshift">
        <sequence resource="EMBL" id="BX821771"/>
    </conflict>
</comment>
<evidence type="ECO:0000250" key="1"/>
<evidence type="ECO:0000255" key="2">
    <source>
        <dbReference type="PROSITE-ProRule" id="PRU00646"/>
    </source>
</evidence>
<evidence type="ECO:0000256" key="3">
    <source>
        <dbReference type="SAM" id="MobiDB-lite"/>
    </source>
</evidence>
<evidence type="ECO:0000269" key="4">
    <source>
    </source>
</evidence>
<evidence type="ECO:0000303" key="5">
    <source>
    </source>
</evidence>
<evidence type="ECO:0000305" key="6"/>
<gene>
    <name type="primary">VPS37-2</name>
    <name type="ordered locus">At2g36680</name>
    <name type="ORF">F13K3.8</name>
</gene>
<organism>
    <name type="scientific">Arabidopsis thaliana</name>
    <name type="common">Mouse-ear cress</name>
    <dbReference type="NCBI Taxonomy" id="3702"/>
    <lineage>
        <taxon>Eukaryota</taxon>
        <taxon>Viridiplantae</taxon>
        <taxon>Streptophyta</taxon>
        <taxon>Embryophyta</taxon>
        <taxon>Tracheophyta</taxon>
        <taxon>Spermatophyta</taxon>
        <taxon>Magnoliopsida</taxon>
        <taxon>eudicotyledons</taxon>
        <taxon>Gunneridae</taxon>
        <taxon>Pentapetalae</taxon>
        <taxon>rosids</taxon>
        <taxon>malvids</taxon>
        <taxon>Brassicales</taxon>
        <taxon>Brassicaceae</taxon>
        <taxon>Camelineae</taxon>
        <taxon>Arabidopsis</taxon>
    </lineage>
</organism>
<dbReference type="EMBL" id="AC006282">
    <property type="protein sequence ID" value="AAD20144.1"/>
    <property type="status" value="ALT_SEQ"/>
    <property type="molecule type" value="Genomic_DNA"/>
</dbReference>
<dbReference type="EMBL" id="CP002685">
    <property type="protein sequence ID" value="AEC09282.1"/>
    <property type="molecule type" value="Genomic_DNA"/>
</dbReference>
<dbReference type="EMBL" id="CP002685">
    <property type="protein sequence ID" value="AEC09283.1"/>
    <property type="molecule type" value="Genomic_DNA"/>
</dbReference>
<dbReference type="EMBL" id="CP002685">
    <property type="protein sequence ID" value="AEC09284.1"/>
    <property type="molecule type" value="Genomic_DNA"/>
</dbReference>
<dbReference type="EMBL" id="CP002685">
    <property type="protein sequence ID" value="AEC09285.1"/>
    <property type="molecule type" value="Genomic_DNA"/>
</dbReference>
<dbReference type="EMBL" id="AY070474">
    <property type="protein sequence ID" value="AAL49940.1"/>
    <property type="molecule type" value="mRNA"/>
</dbReference>
<dbReference type="EMBL" id="AY091674">
    <property type="protein sequence ID" value="AAM10273.1"/>
    <property type="molecule type" value="mRNA"/>
</dbReference>
<dbReference type="EMBL" id="BX821771">
    <property type="status" value="NOT_ANNOTATED_CDS"/>
    <property type="molecule type" value="mRNA"/>
</dbReference>
<dbReference type="PIR" id="D84783">
    <property type="entry name" value="D84783"/>
</dbReference>
<dbReference type="RefSeq" id="NP_001031495.1">
    <molecule id="Q3EBL9-3"/>
    <property type="nucleotide sequence ID" value="NM_001036418.2"/>
</dbReference>
<dbReference type="RefSeq" id="NP_001078013.1">
    <molecule id="Q3EBL9-3"/>
    <property type="nucleotide sequence ID" value="NM_001084544.2"/>
</dbReference>
<dbReference type="RefSeq" id="NP_850268.2">
    <molecule id="Q3EBL9-1"/>
    <property type="nucleotide sequence ID" value="NM_179937.4"/>
</dbReference>
<dbReference type="RefSeq" id="NP_850269.2">
    <molecule id="Q3EBL9-2"/>
    <property type="nucleotide sequence ID" value="NM_179938.2"/>
</dbReference>
<dbReference type="SMR" id="Q3EBL9"/>
<dbReference type="BioGRID" id="3584">
    <property type="interactions" value="3"/>
</dbReference>
<dbReference type="FunCoup" id="Q3EBL9">
    <property type="interactions" value="1497"/>
</dbReference>
<dbReference type="IntAct" id="Q3EBL9">
    <property type="interactions" value="5"/>
</dbReference>
<dbReference type="STRING" id="3702.Q3EBL9"/>
<dbReference type="TCDB" id="3.A.31.1.2">
    <property type="family name" value="the endosomal sorting complexes required for transport iii (escrt-iii) family"/>
</dbReference>
<dbReference type="iPTMnet" id="Q3EBL9"/>
<dbReference type="PaxDb" id="3702-AT2G36680.1"/>
<dbReference type="ProteomicsDB" id="242734">
    <molecule id="Q3EBL9-1"/>
</dbReference>
<dbReference type="EnsemblPlants" id="AT2G36680.1">
    <molecule id="Q3EBL9-1"/>
    <property type="protein sequence ID" value="AT2G36680.1"/>
    <property type="gene ID" value="AT2G36680"/>
</dbReference>
<dbReference type="EnsemblPlants" id="AT2G36680.2">
    <molecule id="Q3EBL9-2"/>
    <property type="protein sequence ID" value="AT2G36680.2"/>
    <property type="gene ID" value="AT2G36680"/>
</dbReference>
<dbReference type="EnsemblPlants" id="AT2G36680.3">
    <molecule id="Q3EBL9-3"/>
    <property type="protein sequence ID" value="AT2G36680.3"/>
    <property type="gene ID" value="AT2G36680"/>
</dbReference>
<dbReference type="EnsemblPlants" id="AT2G36680.4">
    <molecule id="Q3EBL9-3"/>
    <property type="protein sequence ID" value="AT2G36680.4"/>
    <property type="gene ID" value="AT2G36680"/>
</dbReference>
<dbReference type="GeneID" id="818240"/>
<dbReference type="Gramene" id="AT2G36680.1">
    <molecule id="Q3EBL9-1"/>
    <property type="protein sequence ID" value="AT2G36680.1"/>
    <property type="gene ID" value="AT2G36680"/>
</dbReference>
<dbReference type="Gramene" id="AT2G36680.2">
    <molecule id="Q3EBL9-2"/>
    <property type="protein sequence ID" value="AT2G36680.2"/>
    <property type="gene ID" value="AT2G36680"/>
</dbReference>
<dbReference type="Gramene" id="AT2G36680.3">
    <molecule id="Q3EBL9-3"/>
    <property type="protein sequence ID" value="AT2G36680.3"/>
    <property type="gene ID" value="AT2G36680"/>
</dbReference>
<dbReference type="Gramene" id="AT2G36680.4">
    <molecule id="Q3EBL9-3"/>
    <property type="protein sequence ID" value="AT2G36680.4"/>
    <property type="gene ID" value="AT2G36680"/>
</dbReference>
<dbReference type="KEGG" id="ath:AT2G36680"/>
<dbReference type="Araport" id="AT2G36680"/>
<dbReference type="TAIR" id="AT2G36680"/>
<dbReference type="eggNOG" id="KOG3270">
    <property type="taxonomic scope" value="Eukaryota"/>
</dbReference>
<dbReference type="HOGENOM" id="CLU_036442_0_0_1"/>
<dbReference type="InParanoid" id="Q3EBL9"/>
<dbReference type="OMA" id="QKEVYQR"/>
<dbReference type="OrthoDB" id="10260857at2759"/>
<dbReference type="PhylomeDB" id="Q3EBL9"/>
<dbReference type="PRO" id="PR:Q3EBL9"/>
<dbReference type="Proteomes" id="UP000006548">
    <property type="component" value="Chromosome 2"/>
</dbReference>
<dbReference type="ExpressionAtlas" id="Q3EBL9">
    <property type="expression patterns" value="baseline and differential"/>
</dbReference>
<dbReference type="GO" id="GO:0000813">
    <property type="term" value="C:ESCRT I complex"/>
    <property type="evidence" value="ECO:0000250"/>
    <property type="project" value="TAIR"/>
</dbReference>
<dbReference type="GO" id="GO:0009056">
    <property type="term" value="P:catabolic process"/>
    <property type="evidence" value="ECO:0007669"/>
    <property type="project" value="UniProtKB-ARBA"/>
</dbReference>
<dbReference type="GO" id="GO:0015031">
    <property type="term" value="P:protein transport"/>
    <property type="evidence" value="ECO:0007669"/>
    <property type="project" value="UniProtKB-KW"/>
</dbReference>
<dbReference type="FunFam" id="1.10.287.660:FF:000005">
    <property type="entry name" value="Vacuolar protein-sorting-associated protein 37 homolog 1"/>
    <property type="match status" value="1"/>
</dbReference>
<dbReference type="Gene3D" id="1.10.287.660">
    <property type="entry name" value="Helix hairpin bin"/>
    <property type="match status" value="1"/>
</dbReference>
<dbReference type="InterPro" id="IPR037202">
    <property type="entry name" value="ESCRT_assembly_dom"/>
</dbReference>
<dbReference type="InterPro" id="IPR029012">
    <property type="entry name" value="Helix_hairpin_bin_sf"/>
</dbReference>
<dbReference type="InterPro" id="IPR009851">
    <property type="entry name" value="Mod_r"/>
</dbReference>
<dbReference type="PANTHER" id="PTHR13678">
    <property type="entry name" value="VACUOLAR PROTEIN SORTING-ASSOCIATED PROTEIN 37"/>
    <property type="match status" value="1"/>
</dbReference>
<dbReference type="PANTHER" id="PTHR13678:SF22">
    <property type="entry name" value="VACUOLAR PROTEIN-SORTING-ASSOCIATED PROTEIN 37 HOMOLOG 2"/>
    <property type="match status" value="1"/>
</dbReference>
<dbReference type="Pfam" id="PF07200">
    <property type="entry name" value="Mod_r"/>
    <property type="match status" value="1"/>
</dbReference>
<dbReference type="SUPFAM" id="SSF140111">
    <property type="entry name" value="Endosomal sorting complex assembly domain"/>
    <property type="match status" value="1"/>
</dbReference>
<dbReference type="PROSITE" id="PS51314">
    <property type="entry name" value="VPS37_C"/>
    <property type="match status" value="1"/>
</dbReference>
<accession>Q3EBL9</accession>
<accession>Q8VYK5</accession>
<accession>Q9ZQA6</accession>
<name>VP372_ARATH</name>
<keyword id="KW-0025">Alternative splicing</keyword>
<keyword id="KW-0967">Endosome</keyword>
<keyword id="KW-0653">Protein transport</keyword>
<keyword id="KW-1185">Reference proteome</keyword>
<keyword id="KW-0813">Transport</keyword>
<feature type="chain" id="PRO_0000368190" description="Vacuolar protein-sorting-associated protein 37 homolog 2">
    <location>
        <begin position="1"/>
        <end position="218"/>
    </location>
</feature>
<feature type="domain" description="VPS37 C-terminal" evidence="2">
    <location>
        <begin position="137"/>
        <end position="218"/>
    </location>
</feature>
<feature type="region of interest" description="Disordered" evidence="3">
    <location>
        <begin position="1"/>
        <end position="51"/>
    </location>
</feature>
<feature type="compositionally biased region" description="Polar residues" evidence="3">
    <location>
        <begin position="8"/>
        <end position="17"/>
    </location>
</feature>
<feature type="compositionally biased region" description="Low complexity" evidence="3">
    <location>
        <begin position="28"/>
        <end position="40"/>
    </location>
</feature>
<feature type="splice variant" id="VSP_036799" description="In isoform 3." evidence="6">
    <original>CRIIRTSELATAQEKLNELENQREEILKFYSPGSLLHRLQDAMN</original>
    <variation>VNNIIQSLSELIKYMKLLSICIIFLKTVQNNPYIRACDCSREAQ</variation>
    <location>
        <begin position="125"/>
        <end position="168"/>
    </location>
</feature>
<feature type="splice variant" id="VSP_036800" description="In isoform 2." evidence="5">
    <original>CRIIRTSELATAQEK</original>
    <variation>NNPYIRACDCSREAQ</variation>
    <location>
        <begin position="125"/>
        <end position="139"/>
    </location>
</feature>
<feature type="splice variant" id="VSP_036801" description="In isoform 2." evidence="5">
    <location>
        <begin position="140"/>
        <end position="218"/>
    </location>
</feature>
<feature type="splice variant" id="VSP_036802" description="In isoform 3." evidence="6">
    <location>
        <begin position="169"/>
        <end position="218"/>
    </location>
</feature>
<protein>
    <recommendedName>
        <fullName>Vacuolar protein-sorting-associated protein 37 homolog 2</fullName>
        <shortName>AtVPS37-2</shortName>
    </recommendedName>
    <alternativeName>
        <fullName>ESCRT-I complex subunit VPS37 homolog 2</fullName>
    </alternativeName>
</protein>
<reference key="1">
    <citation type="journal article" date="1999" name="Nature">
        <title>Sequence and analysis of chromosome 2 of the plant Arabidopsis thaliana.</title>
        <authorList>
            <person name="Lin X."/>
            <person name="Kaul S."/>
            <person name="Rounsley S.D."/>
            <person name="Shea T.P."/>
            <person name="Benito M.-I."/>
            <person name="Town C.D."/>
            <person name="Fujii C.Y."/>
            <person name="Mason T.M."/>
            <person name="Bowman C.L."/>
            <person name="Barnstead M.E."/>
            <person name="Feldblyum T.V."/>
            <person name="Buell C.R."/>
            <person name="Ketchum K.A."/>
            <person name="Lee J.J."/>
            <person name="Ronning C.M."/>
            <person name="Koo H.L."/>
            <person name="Moffat K.S."/>
            <person name="Cronin L.A."/>
            <person name="Shen M."/>
            <person name="Pai G."/>
            <person name="Van Aken S."/>
            <person name="Umayam L."/>
            <person name="Tallon L.J."/>
            <person name="Gill J.E."/>
            <person name="Adams M.D."/>
            <person name="Carrera A.J."/>
            <person name="Creasy T.H."/>
            <person name="Goodman H.M."/>
            <person name="Somerville C.R."/>
            <person name="Copenhaver G.P."/>
            <person name="Preuss D."/>
            <person name="Nierman W.C."/>
            <person name="White O."/>
            <person name="Eisen J.A."/>
            <person name="Salzberg S.L."/>
            <person name="Fraser C.M."/>
            <person name="Venter J.C."/>
        </authorList>
    </citation>
    <scope>NUCLEOTIDE SEQUENCE [LARGE SCALE GENOMIC DNA]</scope>
    <source>
        <strain>cv. Columbia</strain>
    </source>
</reference>
<reference key="2">
    <citation type="journal article" date="2017" name="Plant J.">
        <title>Araport11: a complete reannotation of the Arabidopsis thaliana reference genome.</title>
        <authorList>
            <person name="Cheng C.Y."/>
            <person name="Krishnakumar V."/>
            <person name="Chan A.P."/>
            <person name="Thibaud-Nissen F."/>
            <person name="Schobel S."/>
            <person name="Town C.D."/>
        </authorList>
    </citation>
    <scope>GENOME REANNOTATION</scope>
    <source>
        <strain>cv. Columbia</strain>
    </source>
</reference>
<reference key="3">
    <citation type="journal article" date="2003" name="Science">
        <title>Empirical analysis of transcriptional activity in the Arabidopsis genome.</title>
        <authorList>
            <person name="Yamada K."/>
            <person name="Lim J."/>
            <person name="Dale J.M."/>
            <person name="Chen H."/>
            <person name="Shinn P."/>
            <person name="Palm C.J."/>
            <person name="Southwick A.M."/>
            <person name="Wu H.C."/>
            <person name="Kim C.J."/>
            <person name="Nguyen M."/>
            <person name="Pham P.K."/>
            <person name="Cheuk R.F."/>
            <person name="Karlin-Newmann G."/>
            <person name="Liu S.X."/>
            <person name="Lam B."/>
            <person name="Sakano H."/>
            <person name="Wu T."/>
            <person name="Yu G."/>
            <person name="Miranda M."/>
            <person name="Quach H.L."/>
            <person name="Tripp M."/>
            <person name="Chang C.H."/>
            <person name="Lee J.M."/>
            <person name="Toriumi M.J."/>
            <person name="Chan M.M."/>
            <person name="Tang C.C."/>
            <person name="Onodera C.S."/>
            <person name="Deng J.M."/>
            <person name="Akiyama K."/>
            <person name="Ansari Y."/>
            <person name="Arakawa T."/>
            <person name="Banh J."/>
            <person name="Banno F."/>
            <person name="Bowser L."/>
            <person name="Brooks S.Y."/>
            <person name="Carninci P."/>
            <person name="Chao Q."/>
            <person name="Choy N."/>
            <person name="Enju A."/>
            <person name="Goldsmith A.D."/>
            <person name="Gurjal M."/>
            <person name="Hansen N.F."/>
            <person name="Hayashizaki Y."/>
            <person name="Johnson-Hopson C."/>
            <person name="Hsuan V.W."/>
            <person name="Iida K."/>
            <person name="Karnes M."/>
            <person name="Khan S."/>
            <person name="Koesema E."/>
            <person name="Ishida J."/>
            <person name="Jiang P.X."/>
            <person name="Jones T."/>
            <person name="Kawai J."/>
            <person name="Kamiya A."/>
            <person name="Meyers C."/>
            <person name="Nakajima M."/>
            <person name="Narusaka M."/>
            <person name="Seki M."/>
            <person name="Sakurai T."/>
            <person name="Satou M."/>
            <person name="Tamse R."/>
            <person name="Vaysberg M."/>
            <person name="Wallender E.K."/>
            <person name="Wong C."/>
            <person name="Yamamura Y."/>
            <person name="Yuan S."/>
            <person name="Shinozaki K."/>
            <person name="Davis R.W."/>
            <person name="Theologis A."/>
            <person name="Ecker J.R."/>
        </authorList>
    </citation>
    <scope>NUCLEOTIDE SEQUENCE [LARGE SCALE MRNA] (ISOFORM 2)</scope>
    <source>
        <strain>cv. Columbia</strain>
    </source>
</reference>
<reference key="4">
    <citation type="journal article" date="2004" name="Genome Res.">
        <title>Whole genome sequence comparisons and 'full-length' cDNA sequences: a combined approach to evaluate and improve Arabidopsis genome annotation.</title>
        <authorList>
            <person name="Castelli V."/>
            <person name="Aury J.-M."/>
            <person name="Jaillon O."/>
            <person name="Wincker P."/>
            <person name="Clepet C."/>
            <person name="Menard M."/>
            <person name="Cruaud C."/>
            <person name="Quetier F."/>
            <person name="Scarpelli C."/>
            <person name="Schaechter V."/>
            <person name="Temple G."/>
            <person name="Caboche M."/>
            <person name="Weissenbach J."/>
            <person name="Salanoubat M."/>
        </authorList>
    </citation>
    <scope>NUCLEOTIDE SEQUENCE [LARGE SCALE MRNA] (ISOFORM 1)</scope>
    <source>
        <strain>cv. Columbia</strain>
    </source>
</reference>
<reference key="5">
    <citation type="journal article" date="2006" name="Development">
        <title>The Arabidopsis elch mutant reveals functions of an ESCRT component in cytokinesis.</title>
        <authorList>
            <person name="Spitzer C."/>
            <person name="Schellmann S."/>
            <person name="Sabovljevic A."/>
            <person name="Shahriari M."/>
            <person name="Keshavaiah C."/>
            <person name="Bechtold N."/>
            <person name="Herzog M."/>
            <person name="Mueller S."/>
            <person name="Hanisch F.-G."/>
            <person name="Huelskamp M."/>
        </authorList>
    </citation>
    <scope>IDENTIFICATION</scope>
    <scope>NOMENCLATURE</scope>
    <scope>INTERACTION WITH ELC</scope>
</reference>
<reference key="6">
    <citation type="journal article" date="2006" name="Trends Plant Sci.">
        <title>Exploring the ESCRTing machinery in eukaryotes.</title>
        <authorList>
            <person name="Winter V."/>
            <person name="Hauser M.-T."/>
        </authorList>
    </citation>
    <scope>IDENTIFICATION</scope>
</reference>